<dbReference type="SMR" id="P86099"/>
<dbReference type="GO" id="GO:0005576">
    <property type="term" value="C:extracellular region"/>
    <property type="evidence" value="ECO:0000314"/>
    <property type="project" value="UniProtKB"/>
</dbReference>
<dbReference type="GO" id="GO:0030550">
    <property type="term" value="F:acetylcholine receptor inhibitor activity"/>
    <property type="evidence" value="ECO:0000314"/>
    <property type="project" value="UniProtKB"/>
</dbReference>
<dbReference type="GO" id="GO:0099106">
    <property type="term" value="F:ion channel regulator activity"/>
    <property type="evidence" value="ECO:0007669"/>
    <property type="project" value="UniProtKB-KW"/>
</dbReference>
<dbReference type="GO" id="GO:0090729">
    <property type="term" value="F:toxin activity"/>
    <property type="evidence" value="ECO:0000314"/>
    <property type="project" value="UniProtKB"/>
</dbReference>
<dbReference type="GO" id="GO:0044504">
    <property type="term" value="P:modulation of receptor activity in another organism"/>
    <property type="evidence" value="ECO:0000314"/>
    <property type="project" value="UniProtKB"/>
</dbReference>
<dbReference type="CDD" id="cd00206">
    <property type="entry name" value="TFP_snake_toxin"/>
    <property type="match status" value="1"/>
</dbReference>
<dbReference type="FunFam" id="2.10.60.10:FF:000024">
    <property type="entry name" value="Cytotoxin 1"/>
    <property type="match status" value="1"/>
</dbReference>
<dbReference type="Gene3D" id="2.10.60.10">
    <property type="entry name" value="CD59"/>
    <property type="match status" value="1"/>
</dbReference>
<dbReference type="InterPro" id="IPR003571">
    <property type="entry name" value="Snake_3FTx"/>
</dbReference>
<dbReference type="InterPro" id="IPR045860">
    <property type="entry name" value="Snake_toxin-like_sf"/>
</dbReference>
<dbReference type="InterPro" id="IPR054131">
    <property type="entry name" value="Toxin_cobra-type"/>
</dbReference>
<dbReference type="Pfam" id="PF21947">
    <property type="entry name" value="Toxin_cobra-type"/>
    <property type="match status" value="1"/>
</dbReference>
<dbReference type="SUPFAM" id="SSF57302">
    <property type="entry name" value="Snake toxin-like"/>
    <property type="match status" value="1"/>
</dbReference>
<proteinExistence type="evidence at protein level"/>
<protein>
    <recommendedName>
        <fullName evidence="3">Long neurotoxin MS5</fullName>
    </recommendedName>
</protein>
<keyword id="KW-0008">Acetylcholine receptor inhibiting toxin</keyword>
<keyword id="KW-0903">Direct protein sequencing</keyword>
<keyword id="KW-1015">Disulfide bond</keyword>
<keyword id="KW-0872">Ion channel impairing toxin</keyword>
<keyword id="KW-0528">Neurotoxin</keyword>
<keyword id="KW-0629">Postsynaptic neurotoxin</keyword>
<keyword id="KW-0964">Secreted</keyword>
<keyword id="KW-0800">Toxin</keyword>
<feature type="chain" id="PRO_0000371721" description="Long neurotoxin MS5" evidence="2">
    <location>
        <begin position="1"/>
        <end position="64"/>
    </location>
</feature>
<feature type="disulfide bond" evidence="1">
    <location>
        <begin position="3"/>
        <end position="24"/>
    </location>
</feature>
<feature type="disulfide bond" evidence="1">
    <location>
        <begin position="6"/>
        <end position="11"/>
    </location>
</feature>
<feature type="disulfide bond" evidence="1">
    <location>
        <begin position="17"/>
        <end position="41"/>
    </location>
</feature>
<feature type="disulfide bond" evidence="1">
    <location>
        <begin position="45"/>
        <end position="57"/>
    </location>
</feature>
<feature type="disulfide bond" evidence="1">
    <location>
        <begin position="58"/>
        <end position="63"/>
    </location>
</feature>
<accession>P86099</accession>
<organism>
    <name type="scientific">Micrurus surinamensis</name>
    <name type="common">Surinam coral snake</name>
    <dbReference type="NCBI Taxonomy" id="129470"/>
    <lineage>
        <taxon>Eukaryota</taxon>
        <taxon>Metazoa</taxon>
        <taxon>Chordata</taxon>
        <taxon>Craniata</taxon>
        <taxon>Vertebrata</taxon>
        <taxon>Euteleostomi</taxon>
        <taxon>Lepidosauria</taxon>
        <taxon>Squamata</taxon>
        <taxon>Bifurcata</taxon>
        <taxon>Unidentata</taxon>
        <taxon>Episquamata</taxon>
        <taxon>Toxicofera</taxon>
        <taxon>Serpentes</taxon>
        <taxon>Colubroidea</taxon>
        <taxon>Elapidae</taxon>
        <taxon>Elapinae</taxon>
        <taxon>Micrurus</taxon>
    </lineage>
</organism>
<reference key="1">
    <citation type="journal article" date="2008" name="Proteomics">
        <title>Proteomic analysis of the venom from the fish eating coral snake Micrurus surinamensis: novel toxins, their function and phylogeny.</title>
        <authorList>
            <person name="Olamendi-Portugal T."/>
            <person name="Batista C.V.F."/>
            <person name="Restano-Cassulini R."/>
            <person name="Pando V."/>
            <person name="Villa-Hernandez O."/>
            <person name="Zavaleta-Martinez-Vargas A."/>
            <person name="Salas-Arruz M.C."/>
            <person name="Rodriguez de la Vega R.C."/>
            <person name="Becerril B."/>
            <person name="Possani L.D."/>
        </authorList>
    </citation>
    <scope>PROTEIN SEQUENCE</scope>
    <scope>FUNCTION</scope>
    <scope>SUBCELLULAR LOCATION</scope>
    <source>
        <tissue>Venom</tissue>
    </source>
</reference>
<evidence type="ECO:0000250" key="1">
    <source>
        <dbReference type="UniProtKB" id="P81783"/>
    </source>
</evidence>
<evidence type="ECO:0000269" key="2">
    <source>
    </source>
</evidence>
<evidence type="ECO:0000303" key="3">
    <source>
    </source>
</evidence>
<evidence type="ECO:0000305" key="4"/>
<name>3NX5_MICSU</name>
<comment type="function">
    <text evidence="2">Produces peripheral paralysis by blocking neuromuscular transmission at the postsynaptic site. Very weak inhibitor of the endogenous nicotinic acetylcholine receptors (nAChR) in the human rhabdomyosarcoma TE 671 cell line. This neurotoxin is lethal to zebrafish by injection at the back of the dorsolateral region, but is not toxic to mice by intraperitoneal injection.</text>
</comment>
<comment type="subcellular location">
    <subcellularLocation>
        <location evidence="2">Secreted</location>
    </subcellularLocation>
</comment>
<comment type="tissue specificity">
    <text evidence="4">Expressed by the venom gland.</text>
</comment>
<comment type="similarity">
    <text evidence="4">Belongs to the three-finger toxin family. Ancestral subfamily.</text>
</comment>
<sequence length="64" mass="7189">LTCHTCPYNTCANSETCPAGKNICYQKKWEEHRGERIERSCVANCPEFESSHTSLLCCTTANCD</sequence>